<evidence type="ECO:0000255" key="1">
    <source>
        <dbReference type="HAMAP-Rule" id="MF_00332"/>
    </source>
</evidence>
<evidence type="ECO:0000256" key="2">
    <source>
        <dbReference type="SAM" id="MobiDB-lite"/>
    </source>
</evidence>
<name>DNAK_STAAS</name>
<accession>Q6G8Y7</accession>
<proteinExistence type="inferred from homology"/>
<sequence>MSKIIGIDLGTTNSCVTVLEGDEPKVIQNPEGSRTTPSVVAFKNGETQVGEVAKRQAITNPNTVQSIKRHMGTDYKVDIEGKSYTPQEISAMILQNLKNTAESYLGEKVDKAVITVPAYFNDAERQATKDAGKIAGLEVERIINEPTAAALAYGLDKTDKDEKVLVFDLGGGTFDVSILELGDGVFEVLSTAGDNKLGGDDFDQVIIDYLVAEFKKENGVDLSQDKMALQRLKDAAEKAKKDLSGVSQTQISLPFISAGENGPLHLEVNLTRSKFEELSDSLIRRTMEPTRQAMKDAGLTNSDIDEVILVGGSTRIPAVQEAVKKEIGKEPNKGVNPDEVVAMGAAIQGGVITGDVKDVVLLDVTPLSLGIEILGGRMNTLIERNTTIPTSKSQIYSTAVDNQPSVDVHVLQGERPMAADNKTLGRFQLTDIPPAERGKPQIEVTFDIDKNGIVNVTAKDLGTNKEQRITIQSSSSLSDEEIDRMVKDAEVNAEADKKRREEVDLRNEADSLVFQVEKTLTDLGENIGEEDKKSAEEKKDALKTALEGQDIEDIKSKKEELEKVIQELSAKVYEQAAQQQQQAQGANAGQNNDSTVEDAEFKEVKDDDKK</sequence>
<keyword id="KW-0067">ATP-binding</keyword>
<keyword id="KW-0143">Chaperone</keyword>
<keyword id="KW-0547">Nucleotide-binding</keyword>
<keyword id="KW-0597">Phosphoprotein</keyword>
<keyword id="KW-0346">Stress response</keyword>
<organism>
    <name type="scientific">Staphylococcus aureus (strain MSSA476)</name>
    <dbReference type="NCBI Taxonomy" id="282459"/>
    <lineage>
        <taxon>Bacteria</taxon>
        <taxon>Bacillati</taxon>
        <taxon>Bacillota</taxon>
        <taxon>Bacilli</taxon>
        <taxon>Bacillales</taxon>
        <taxon>Staphylococcaceae</taxon>
        <taxon>Staphylococcus</taxon>
    </lineage>
</organism>
<protein>
    <recommendedName>
        <fullName evidence="1">Chaperone protein DnaK</fullName>
    </recommendedName>
    <alternativeName>
        <fullName evidence="1">HSP70</fullName>
    </alternativeName>
    <alternativeName>
        <fullName evidence="1">Heat shock 70 kDa protein</fullName>
    </alternativeName>
    <alternativeName>
        <fullName evidence="1">Heat shock protein 70</fullName>
    </alternativeName>
</protein>
<gene>
    <name evidence="1" type="primary">dnaK</name>
    <name type="ordered locus">SAS1518</name>
</gene>
<dbReference type="EMBL" id="BX571857">
    <property type="protein sequence ID" value="CAG43319.1"/>
    <property type="molecule type" value="Genomic_DNA"/>
</dbReference>
<dbReference type="RefSeq" id="WP_000034716.1">
    <property type="nucleotide sequence ID" value="NC_002953.3"/>
</dbReference>
<dbReference type="SMR" id="Q6G8Y7"/>
<dbReference type="KEGG" id="sas:SAS1518"/>
<dbReference type="HOGENOM" id="CLU_005965_2_4_9"/>
<dbReference type="GO" id="GO:0005524">
    <property type="term" value="F:ATP binding"/>
    <property type="evidence" value="ECO:0007669"/>
    <property type="project" value="UniProtKB-UniRule"/>
</dbReference>
<dbReference type="GO" id="GO:0140662">
    <property type="term" value="F:ATP-dependent protein folding chaperone"/>
    <property type="evidence" value="ECO:0007669"/>
    <property type="project" value="InterPro"/>
</dbReference>
<dbReference type="GO" id="GO:0051082">
    <property type="term" value="F:unfolded protein binding"/>
    <property type="evidence" value="ECO:0007669"/>
    <property type="project" value="InterPro"/>
</dbReference>
<dbReference type="CDD" id="cd10234">
    <property type="entry name" value="ASKHA_NBD_HSP70_DnaK-like"/>
    <property type="match status" value="1"/>
</dbReference>
<dbReference type="FunFam" id="2.60.34.10:FF:000014">
    <property type="entry name" value="Chaperone protein DnaK HSP70"/>
    <property type="match status" value="1"/>
</dbReference>
<dbReference type="FunFam" id="1.20.1270.10:FF:000001">
    <property type="entry name" value="Molecular chaperone DnaK"/>
    <property type="match status" value="1"/>
</dbReference>
<dbReference type="FunFam" id="3.30.420.40:FF:000071">
    <property type="entry name" value="Molecular chaperone DnaK"/>
    <property type="match status" value="1"/>
</dbReference>
<dbReference type="FunFam" id="3.90.640.10:FF:000003">
    <property type="entry name" value="Molecular chaperone DnaK"/>
    <property type="match status" value="1"/>
</dbReference>
<dbReference type="Gene3D" id="1.20.1270.10">
    <property type="match status" value="1"/>
</dbReference>
<dbReference type="Gene3D" id="3.30.420.40">
    <property type="match status" value="2"/>
</dbReference>
<dbReference type="Gene3D" id="3.90.640.10">
    <property type="entry name" value="Actin, Chain A, domain 4"/>
    <property type="match status" value="1"/>
</dbReference>
<dbReference type="Gene3D" id="2.60.34.10">
    <property type="entry name" value="Substrate Binding Domain Of DNAk, Chain A, domain 1"/>
    <property type="match status" value="1"/>
</dbReference>
<dbReference type="HAMAP" id="MF_00332">
    <property type="entry name" value="DnaK"/>
    <property type="match status" value="1"/>
</dbReference>
<dbReference type="InterPro" id="IPR043129">
    <property type="entry name" value="ATPase_NBD"/>
</dbReference>
<dbReference type="InterPro" id="IPR012725">
    <property type="entry name" value="Chaperone_DnaK"/>
</dbReference>
<dbReference type="InterPro" id="IPR018181">
    <property type="entry name" value="Heat_shock_70_CS"/>
</dbReference>
<dbReference type="InterPro" id="IPR029048">
    <property type="entry name" value="HSP70_C_sf"/>
</dbReference>
<dbReference type="InterPro" id="IPR029047">
    <property type="entry name" value="HSP70_peptide-bd_sf"/>
</dbReference>
<dbReference type="InterPro" id="IPR013126">
    <property type="entry name" value="Hsp_70_fam"/>
</dbReference>
<dbReference type="NCBIfam" id="NF001413">
    <property type="entry name" value="PRK00290.1"/>
    <property type="match status" value="1"/>
</dbReference>
<dbReference type="NCBIfam" id="TIGR02350">
    <property type="entry name" value="prok_dnaK"/>
    <property type="match status" value="1"/>
</dbReference>
<dbReference type="PANTHER" id="PTHR19375">
    <property type="entry name" value="HEAT SHOCK PROTEIN 70KDA"/>
    <property type="match status" value="1"/>
</dbReference>
<dbReference type="Pfam" id="PF00012">
    <property type="entry name" value="HSP70"/>
    <property type="match status" value="1"/>
</dbReference>
<dbReference type="PRINTS" id="PR00301">
    <property type="entry name" value="HEATSHOCK70"/>
</dbReference>
<dbReference type="SUPFAM" id="SSF53067">
    <property type="entry name" value="Actin-like ATPase domain"/>
    <property type="match status" value="2"/>
</dbReference>
<dbReference type="SUPFAM" id="SSF100934">
    <property type="entry name" value="Heat shock protein 70kD (HSP70), C-terminal subdomain"/>
    <property type="match status" value="1"/>
</dbReference>
<dbReference type="SUPFAM" id="SSF100920">
    <property type="entry name" value="Heat shock protein 70kD (HSP70), peptide-binding domain"/>
    <property type="match status" value="1"/>
</dbReference>
<dbReference type="PROSITE" id="PS00297">
    <property type="entry name" value="HSP70_1"/>
    <property type="match status" value="1"/>
</dbReference>
<dbReference type="PROSITE" id="PS00329">
    <property type="entry name" value="HSP70_2"/>
    <property type="match status" value="1"/>
</dbReference>
<dbReference type="PROSITE" id="PS01036">
    <property type="entry name" value="HSP70_3"/>
    <property type="match status" value="1"/>
</dbReference>
<feature type="chain" id="PRO_0000078540" description="Chaperone protein DnaK">
    <location>
        <begin position="1"/>
        <end position="610"/>
    </location>
</feature>
<feature type="region of interest" description="Disordered" evidence="2">
    <location>
        <begin position="525"/>
        <end position="544"/>
    </location>
</feature>
<feature type="region of interest" description="Disordered" evidence="2">
    <location>
        <begin position="576"/>
        <end position="610"/>
    </location>
</feature>
<feature type="compositionally biased region" description="Basic and acidic residues" evidence="2">
    <location>
        <begin position="529"/>
        <end position="542"/>
    </location>
</feature>
<feature type="compositionally biased region" description="Low complexity" evidence="2">
    <location>
        <begin position="576"/>
        <end position="592"/>
    </location>
</feature>
<feature type="compositionally biased region" description="Basic and acidic residues" evidence="2">
    <location>
        <begin position="599"/>
        <end position="610"/>
    </location>
</feature>
<feature type="modified residue" description="Phosphothreonine; by autocatalysis" evidence="1">
    <location>
        <position position="173"/>
    </location>
</feature>
<reference key="1">
    <citation type="journal article" date="2004" name="Proc. Natl. Acad. Sci. U.S.A.">
        <title>Complete genomes of two clinical Staphylococcus aureus strains: evidence for the rapid evolution of virulence and drug resistance.</title>
        <authorList>
            <person name="Holden M.T.G."/>
            <person name="Feil E.J."/>
            <person name="Lindsay J.A."/>
            <person name="Peacock S.J."/>
            <person name="Day N.P.J."/>
            <person name="Enright M.C."/>
            <person name="Foster T.J."/>
            <person name="Moore C.E."/>
            <person name="Hurst L."/>
            <person name="Atkin R."/>
            <person name="Barron A."/>
            <person name="Bason N."/>
            <person name="Bentley S.D."/>
            <person name="Chillingworth C."/>
            <person name="Chillingworth T."/>
            <person name="Churcher C."/>
            <person name="Clark L."/>
            <person name="Corton C."/>
            <person name="Cronin A."/>
            <person name="Doggett J."/>
            <person name="Dowd L."/>
            <person name="Feltwell T."/>
            <person name="Hance Z."/>
            <person name="Harris B."/>
            <person name="Hauser H."/>
            <person name="Holroyd S."/>
            <person name="Jagels K."/>
            <person name="James K.D."/>
            <person name="Lennard N."/>
            <person name="Line A."/>
            <person name="Mayes R."/>
            <person name="Moule S."/>
            <person name="Mungall K."/>
            <person name="Ormond D."/>
            <person name="Quail M.A."/>
            <person name="Rabbinowitsch E."/>
            <person name="Rutherford K.M."/>
            <person name="Sanders M."/>
            <person name="Sharp S."/>
            <person name="Simmonds M."/>
            <person name="Stevens K."/>
            <person name="Whitehead S."/>
            <person name="Barrell B.G."/>
            <person name="Spratt B.G."/>
            <person name="Parkhill J."/>
        </authorList>
    </citation>
    <scope>NUCLEOTIDE SEQUENCE [LARGE SCALE GENOMIC DNA]</scope>
    <source>
        <strain>MSSA476</strain>
    </source>
</reference>
<comment type="function">
    <text evidence="1">Acts as a chaperone.</text>
</comment>
<comment type="induction">
    <text evidence="1">By stress conditions e.g. heat shock.</text>
</comment>
<comment type="similarity">
    <text evidence="1">Belongs to the heat shock protein 70 family.</text>
</comment>